<comment type="function">
    <text evidence="2">IMP-specific 5'-nucleotidase involved in IMP (inositol monophosphate) degradation.</text>
</comment>
<comment type="catalytic activity">
    <reaction evidence="2">
        <text>IMP + H2O = inosine + phosphate</text>
        <dbReference type="Rhea" id="RHEA:27718"/>
        <dbReference type="ChEBI" id="CHEBI:15377"/>
        <dbReference type="ChEBI" id="CHEBI:17596"/>
        <dbReference type="ChEBI" id="CHEBI:43474"/>
        <dbReference type="ChEBI" id="CHEBI:58053"/>
        <dbReference type="EC" id="3.1.3.99"/>
    </reaction>
</comment>
<comment type="cofactor">
    <cofactor evidence="2">
        <name>Mg(2+)</name>
        <dbReference type="ChEBI" id="CHEBI:18420"/>
    </cofactor>
</comment>
<comment type="activity regulation">
    <text evidence="1 2">Allosterically activated by ATP (By similarity). ATP binding is a prerequisite to magnesium and substrate binding. ATP binds to 2 of the subunits in the homotetramer inducing a closure of these 2 subunits and the release of the C-terminal loop, thereby activating the enzyme (By similarity).</text>
</comment>
<comment type="subunit">
    <text evidence="2">Homotetramer.</text>
</comment>
<comment type="similarity">
    <text evidence="4">Belongs to the ISN1 family.</text>
</comment>
<comment type="sequence caution" evidence="4">
    <conflict type="erroneous gene model prediction">
        <sequence resource="EMBL-CDS" id="ESU14369"/>
    </conflict>
</comment>
<dbReference type="EC" id="3.1.3.99" evidence="2"/>
<dbReference type="EMBL" id="DS231667">
    <property type="protein sequence ID" value="ESU14369.1"/>
    <property type="status" value="ALT_SEQ"/>
    <property type="molecule type" value="Genomic_DNA"/>
</dbReference>
<dbReference type="EMBL" id="HG970333">
    <property type="protein sequence ID" value="SCB65686.1"/>
    <property type="molecule type" value="Genomic_DNA"/>
</dbReference>
<dbReference type="RefSeq" id="XP_011319794.1">
    <property type="nucleotide sequence ID" value="XM_011321492.1"/>
</dbReference>
<dbReference type="SMR" id="Q4HTS9"/>
<dbReference type="FunCoup" id="Q4HTS9">
    <property type="interactions" value="91"/>
</dbReference>
<dbReference type="STRING" id="229533.Q4HTS9"/>
<dbReference type="GeneID" id="23558450"/>
<dbReference type="KEGG" id="fgr:FGSG_11629"/>
<dbReference type="VEuPathDB" id="FungiDB:FGRAMPH1_01G11151"/>
<dbReference type="eggNOG" id="ENOG502QR24">
    <property type="taxonomic scope" value="Eukaryota"/>
</dbReference>
<dbReference type="HOGENOM" id="CLU_031816_1_0_1"/>
<dbReference type="InParanoid" id="Q4HTS9"/>
<dbReference type="OrthoDB" id="47408at110618"/>
<dbReference type="Proteomes" id="UP000070720">
    <property type="component" value="Chromosome 2"/>
</dbReference>
<dbReference type="GO" id="GO:0005524">
    <property type="term" value="F:ATP binding"/>
    <property type="evidence" value="ECO:0007669"/>
    <property type="project" value="UniProtKB-KW"/>
</dbReference>
<dbReference type="GO" id="GO:0050483">
    <property type="term" value="F:IMP 5'-nucleotidase activity"/>
    <property type="evidence" value="ECO:0007669"/>
    <property type="project" value="InterPro"/>
</dbReference>
<dbReference type="GO" id="GO:0000287">
    <property type="term" value="F:magnesium ion binding"/>
    <property type="evidence" value="ECO:0007669"/>
    <property type="project" value="InterPro"/>
</dbReference>
<dbReference type="GO" id="GO:0006190">
    <property type="term" value="P:inosine salvage"/>
    <property type="evidence" value="ECO:0007669"/>
    <property type="project" value="InterPro"/>
</dbReference>
<dbReference type="GO" id="GO:0071590">
    <property type="term" value="P:nicotinamide riboside biosynthetic process"/>
    <property type="evidence" value="ECO:0007669"/>
    <property type="project" value="TreeGrafter"/>
</dbReference>
<dbReference type="GO" id="GO:0071592">
    <property type="term" value="P:nicotinic acid riboside biosynthetic process"/>
    <property type="evidence" value="ECO:0007669"/>
    <property type="project" value="TreeGrafter"/>
</dbReference>
<dbReference type="GO" id="GO:0009117">
    <property type="term" value="P:nucleotide metabolic process"/>
    <property type="evidence" value="ECO:0007669"/>
    <property type="project" value="UniProtKB-KW"/>
</dbReference>
<dbReference type="InterPro" id="IPR036412">
    <property type="entry name" value="HAD-like_sf"/>
</dbReference>
<dbReference type="InterPro" id="IPR009453">
    <property type="entry name" value="ISN1"/>
</dbReference>
<dbReference type="PANTHER" id="PTHR28213">
    <property type="entry name" value="IMP-SPECIFIC 5'-NUCLEOTIDASE 1"/>
    <property type="match status" value="1"/>
</dbReference>
<dbReference type="PANTHER" id="PTHR28213:SF1">
    <property type="entry name" value="IMP-SPECIFIC 5'-NUCLEOTIDASE 1"/>
    <property type="match status" value="1"/>
</dbReference>
<dbReference type="Pfam" id="PF06437">
    <property type="entry name" value="ISN1"/>
    <property type="match status" value="1"/>
</dbReference>
<dbReference type="PIRSF" id="PIRSF028836">
    <property type="entry name" value="ISN1"/>
    <property type="match status" value="1"/>
</dbReference>
<dbReference type="SUPFAM" id="SSF56784">
    <property type="entry name" value="HAD-like"/>
    <property type="match status" value="1"/>
</dbReference>
<name>ISN1_GIBZE</name>
<sequence length="446" mass="49756">MTTRYRVEYALKTHRRDQFIEWVKGLLAVPFVLYSQPTGVFGDGPSVTQMAEEAHRRYAEIMRDVELMIDDHISRQQDDSMFPSKLRMLIPTAGPFFTRLPLEAAFKYQDRKRYISSRRFVAPSFNDVRQILNSAQSMAVTNGSLQLATFDGDVTLYDDGFNLEPTSPVIPRLLDLLRKNIKIGIVTAAGYTSADRYYERLHGLLDAIAESTDLDPVQKQSIIIMGGEANYLFEYSPSSPCKLAPVPRTQWLTPEMASWSDADITRLLDVAENALRDCVNNLNLPAMIMRKDRAVGIIPKTPGTRIARESLEETVLVVQRILELSSLGSSEERPTKHRPSSPPIPPSVASQSRRVPFCAFNGGNDVFVDIGDKSWGVTVCQQWFGSKENGGAIRGENTLHVGDQFLSAGSNDFKARSVGTTAWIASPAETVELLDELADMMQKKLS</sequence>
<accession>Q4HTS9</accession>
<accession>A0A098DEH7</accession>
<accession>A0A0E0S1K3</accession>
<accession>A0A1C3YMF3</accession>
<accession>V6RJE7</accession>
<organism>
    <name type="scientific">Gibberella zeae (strain ATCC MYA-4620 / CBS 123657 / FGSC 9075 / NRRL 31084 / PH-1)</name>
    <name type="common">Wheat head blight fungus</name>
    <name type="synonym">Fusarium graminearum</name>
    <dbReference type="NCBI Taxonomy" id="229533"/>
    <lineage>
        <taxon>Eukaryota</taxon>
        <taxon>Fungi</taxon>
        <taxon>Dikarya</taxon>
        <taxon>Ascomycota</taxon>
        <taxon>Pezizomycotina</taxon>
        <taxon>Sordariomycetes</taxon>
        <taxon>Hypocreomycetidae</taxon>
        <taxon>Hypocreales</taxon>
        <taxon>Nectriaceae</taxon>
        <taxon>Fusarium</taxon>
    </lineage>
</organism>
<reference key="1">
    <citation type="journal article" date="2007" name="Science">
        <title>The Fusarium graminearum genome reveals a link between localized polymorphism and pathogen specialization.</title>
        <authorList>
            <person name="Cuomo C.A."/>
            <person name="Gueldener U."/>
            <person name="Xu J.-R."/>
            <person name="Trail F."/>
            <person name="Turgeon B.G."/>
            <person name="Di Pietro A."/>
            <person name="Walton J.D."/>
            <person name="Ma L.-J."/>
            <person name="Baker S.E."/>
            <person name="Rep M."/>
            <person name="Adam G."/>
            <person name="Antoniw J."/>
            <person name="Baldwin T."/>
            <person name="Calvo S.E."/>
            <person name="Chang Y.-L."/>
            <person name="DeCaprio D."/>
            <person name="Gale L.R."/>
            <person name="Gnerre S."/>
            <person name="Goswami R.S."/>
            <person name="Hammond-Kosack K."/>
            <person name="Harris L.J."/>
            <person name="Hilburn K."/>
            <person name="Kennell J.C."/>
            <person name="Kroken S."/>
            <person name="Magnuson J.K."/>
            <person name="Mannhaupt G."/>
            <person name="Mauceli E.W."/>
            <person name="Mewes H.-W."/>
            <person name="Mitterbauer R."/>
            <person name="Muehlbauer G."/>
            <person name="Muensterkoetter M."/>
            <person name="Nelson D."/>
            <person name="O'Donnell K."/>
            <person name="Ouellet T."/>
            <person name="Qi W."/>
            <person name="Quesneville H."/>
            <person name="Roncero M.I.G."/>
            <person name="Seong K.-Y."/>
            <person name="Tetko I.V."/>
            <person name="Urban M."/>
            <person name="Waalwijk C."/>
            <person name="Ward T.J."/>
            <person name="Yao J."/>
            <person name="Birren B.W."/>
            <person name="Kistler H.C."/>
        </authorList>
    </citation>
    <scope>NUCLEOTIDE SEQUENCE [LARGE SCALE GENOMIC DNA]</scope>
    <source>
        <strain>ATCC MYA-4620 / CBS 123657 / FGSC 9075 / NRRL 31084 / PH-1</strain>
    </source>
</reference>
<reference key="2">
    <citation type="journal article" date="2010" name="Nature">
        <title>Comparative genomics reveals mobile pathogenicity chromosomes in Fusarium.</title>
        <authorList>
            <person name="Ma L.-J."/>
            <person name="van der Does H.C."/>
            <person name="Borkovich K.A."/>
            <person name="Coleman J.J."/>
            <person name="Daboussi M.-J."/>
            <person name="Di Pietro A."/>
            <person name="Dufresne M."/>
            <person name="Freitag M."/>
            <person name="Grabherr M."/>
            <person name="Henrissat B."/>
            <person name="Houterman P.M."/>
            <person name="Kang S."/>
            <person name="Shim W.-B."/>
            <person name="Woloshuk C."/>
            <person name="Xie X."/>
            <person name="Xu J.-R."/>
            <person name="Antoniw J."/>
            <person name="Baker S.E."/>
            <person name="Bluhm B.H."/>
            <person name="Breakspear A."/>
            <person name="Brown D.W."/>
            <person name="Butchko R.A.E."/>
            <person name="Chapman S."/>
            <person name="Coulson R."/>
            <person name="Coutinho P.M."/>
            <person name="Danchin E.G.J."/>
            <person name="Diener A."/>
            <person name="Gale L.R."/>
            <person name="Gardiner D.M."/>
            <person name="Goff S."/>
            <person name="Hammond-Kosack K.E."/>
            <person name="Hilburn K."/>
            <person name="Hua-Van A."/>
            <person name="Jonkers W."/>
            <person name="Kazan K."/>
            <person name="Kodira C.D."/>
            <person name="Koehrsen M."/>
            <person name="Kumar L."/>
            <person name="Lee Y.-H."/>
            <person name="Li L."/>
            <person name="Manners J.M."/>
            <person name="Miranda-Saavedra D."/>
            <person name="Mukherjee M."/>
            <person name="Park G."/>
            <person name="Park J."/>
            <person name="Park S.-Y."/>
            <person name="Proctor R.H."/>
            <person name="Regev A."/>
            <person name="Ruiz-Roldan M.C."/>
            <person name="Sain D."/>
            <person name="Sakthikumar S."/>
            <person name="Sykes S."/>
            <person name="Schwartz D.C."/>
            <person name="Turgeon B.G."/>
            <person name="Wapinski I."/>
            <person name="Yoder O."/>
            <person name="Young S."/>
            <person name="Zeng Q."/>
            <person name="Zhou S."/>
            <person name="Galagan J."/>
            <person name="Cuomo C.A."/>
            <person name="Kistler H.C."/>
            <person name="Rep M."/>
        </authorList>
    </citation>
    <scope>GENOME REANNOTATION</scope>
    <source>
        <strain>ATCC MYA-4620 / CBS 123657 / FGSC 9075 / NRRL 31084 / PH-1</strain>
    </source>
</reference>
<reference key="3">
    <citation type="journal article" date="2015" name="BMC Genomics">
        <title>The completed genome sequence of the pathogenic ascomycete fungus Fusarium graminearum.</title>
        <authorList>
            <person name="King R."/>
            <person name="Urban M."/>
            <person name="Hammond-Kosack M.C.U."/>
            <person name="Hassani-Pak K."/>
            <person name="Hammond-Kosack K.E."/>
        </authorList>
    </citation>
    <scope>NUCLEOTIDE SEQUENCE [LARGE SCALE GENOMIC DNA]</scope>
    <source>
        <strain>ATCC MYA-4620 / CBS 123657 / FGSC 9075 / NRRL 31084 / PH-1</strain>
    </source>
</reference>
<feature type="chain" id="PRO_0000084252" description="IMP-specific 5'-nucleotidase 1">
    <location>
        <begin position="1"/>
        <end position="446"/>
    </location>
</feature>
<feature type="region of interest" description="Disordered" evidence="3">
    <location>
        <begin position="328"/>
        <end position="350"/>
    </location>
</feature>
<feature type="active site" description="Nucleophile" evidence="1">
    <location>
        <position position="151"/>
    </location>
</feature>
<feature type="active site" description="Proton donor" evidence="1">
    <location>
        <position position="153"/>
    </location>
</feature>
<feature type="binding site" evidence="1">
    <location>
        <position position="112"/>
    </location>
    <ligand>
        <name>ATP</name>
        <dbReference type="ChEBI" id="CHEBI:30616"/>
        <note>allosteric activator</note>
    </ligand>
</feature>
<feature type="binding site" evidence="1">
    <location>
        <position position="151"/>
    </location>
    <ligand>
        <name>IMP</name>
        <dbReference type="ChEBI" id="CHEBI:58053"/>
    </ligand>
</feature>
<feature type="binding site" evidence="1">
    <location>
        <position position="151"/>
    </location>
    <ligand>
        <name>Mg(2+)</name>
        <dbReference type="ChEBI" id="CHEBI:18420"/>
    </ligand>
</feature>
<feature type="binding site" evidence="1">
    <location>
        <position position="153"/>
    </location>
    <ligand>
        <name>IMP</name>
        <dbReference type="ChEBI" id="CHEBI:58053"/>
    </ligand>
</feature>
<feature type="binding site" evidence="1">
    <location>
        <position position="153"/>
    </location>
    <ligand>
        <name>Mg(2+)</name>
        <dbReference type="ChEBI" id="CHEBI:18420"/>
    </ligand>
</feature>
<feature type="binding site" evidence="1">
    <location>
        <position position="159"/>
    </location>
    <ligand>
        <name>IMP</name>
        <dbReference type="ChEBI" id="CHEBI:58053"/>
    </ligand>
</feature>
<feature type="binding site" evidence="1">
    <location>
        <position position="187"/>
    </location>
    <ligand>
        <name>IMP</name>
        <dbReference type="ChEBI" id="CHEBI:58053"/>
    </ligand>
</feature>
<feature type="binding site" evidence="1">
    <location>
        <position position="365"/>
    </location>
    <ligand>
        <name>IMP</name>
        <dbReference type="ChEBI" id="CHEBI:58053"/>
    </ligand>
</feature>
<feature type="binding site" evidence="1">
    <location>
        <position position="373"/>
    </location>
    <ligand>
        <name>IMP</name>
        <dbReference type="ChEBI" id="CHEBI:58053"/>
    </ligand>
</feature>
<feature type="binding site" evidence="1">
    <location>
        <position position="403"/>
    </location>
    <ligand>
        <name>Mg(2+)</name>
        <dbReference type="ChEBI" id="CHEBI:18420"/>
    </ligand>
</feature>
<gene>
    <name type="primary">ISN1</name>
    <name type="ORF">FGRAMPH1_01T11151</name>
    <name type="ORF">FGRRES_11629_M</name>
    <name type="ORF">FGSG_11629</name>
</gene>
<keyword id="KW-0067">ATP-binding</keyword>
<keyword id="KW-0378">Hydrolase</keyword>
<keyword id="KW-0460">Magnesium</keyword>
<keyword id="KW-0479">Metal-binding</keyword>
<keyword id="KW-0546">Nucleotide metabolism</keyword>
<keyword id="KW-0547">Nucleotide-binding</keyword>
<keyword id="KW-1185">Reference proteome</keyword>
<proteinExistence type="inferred from homology"/>
<protein>
    <recommendedName>
        <fullName>IMP-specific 5'-nucleotidase 1</fullName>
        <ecNumber evidence="2">3.1.3.99</ecNumber>
    </recommendedName>
</protein>
<evidence type="ECO:0000250" key="1">
    <source>
        <dbReference type="UniProtKB" id="A0A144A134"/>
    </source>
</evidence>
<evidence type="ECO:0000250" key="2">
    <source>
        <dbReference type="UniProtKB" id="Q99312"/>
    </source>
</evidence>
<evidence type="ECO:0000256" key="3">
    <source>
        <dbReference type="SAM" id="MobiDB-lite"/>
    </source>
</evidence>
<evidence type="ECO:0000305" key="4"/>